<sequence>MALVLRLMGGAAGMGAKAVGGACCELGSACFRQITKGLPHPTECGCLGSLFFYLGIHDHQKFNVLVEIHELDRVPKSCSLYMTIEAGRWSATSQVVKVKGQDQRVVVEERLMVHIRQVDNEVKIFLFKKGLVKTTRLANLVLKVKEDMIDKKFPKRTWYNMKVENGKSQPRINLSLHKLDPGLPTNQSPLLQQAMLIAQQEADEKGEELKLDLAKMTAKERLTFFSQVLEGPLERLNANGGACMQFYYKAVEVKPDRWEWCYWESAAACKEGKEKEGSIPFLAISLVLPDRKNRNVFFVRYHDKDNQHDVFFRRVDRDRNLWSDGLYEFIEKLRAYRETCSTRVPSQKGADGEEKKKKKKRREDGEDSSGEKSPRKSGGKKSRRPSTSPRLDISTARRLHSPRAQVPSKSPCAHQQMYEEVMISTQSSVVGDEEPQT</sequence>
<evidence type="ECO:0000256" key="1">
    <source>
        <dbReference type="SAM" id="MobiDB-lite"/>
    </source>
</evidence>
<evidence type="ECO:0000269" key="2">
    <source>
    </source>
</evidence>
<evidence type="ECO:0000303" key="3">
    <source>
    </source>
</evidence>
<evidence type="ECO:0000305" key="4"/>
<evidence type="ECO:0000305" key="5">
    <source>
    </source>
</evidence>
<evidence type="ECO:0000312" key="6">
    <source>
        <dbReference type="EMBL" id="EPR58892.1"/>
    </source>
</evidence>
<evidence type="ECO:0000312" key="7">
    <source>
        <dbReference type="Proteomes" id="UP000005641"/>
    </source>
</evidence>
<accession>S7UMJ0</accession>
<protein>
    <recommendedName>
        <fullName evidence="3">Rhoptry apical surface protein 2</fullName>
        <shortName evidence="3">TgRASP2</shortName>
    </recommendedName>
</protein>
<keyword id="KW-0968">Cytoplasmic vesicle</keyword>
<keyword id="KW-0472">Membrane</keyword>
<proteinExistence type="evidence at protein level"/>
<feature type="chain" id="PRO_0000456209" description="Rhoptry apical surface protein 2">
    <location>
        <begin position="1"/>
        <end position="437"/>
    </location>
</feature>
<feature type="domain" description="C2" evidence="5">
    <location>
        <begin position="45"/>
        <end position="179"/>
    </location>
</feature>
<feature type="domain" description="PH" evidence="5">
    <location>
        <begin position="230"/>
        <end position="338"/>
    </location>
</feature>
<feature type="region of interest" description="Disordered" evidence="1">
    <location>
        <begin position="341"/>
        <end position="437"/>
    </location>
</feature>
<feature type="compositionally biased region" description="Basic residues" evidence="1">
    <location>
        <begin position="375"/>
        <end position="384"/>
    </location>
</feature>
<feature type="mutagenesis site" description="Mislocalizes to the cytoplasm. Impairs tachyzoite lytic cycle." evidence="2">
    <location>
        <begin position="62"/>
        <end position="179"/>
    </location>
</feature>
<feature type="mutagenesis site" description="No defect in subcellular localization and tachyzoite lytic cycle. Impairs tachyzoite lytic cycle; when associated with 230-E--E-363 DEL." evidence="2">
    <original>KIFLFKK</original>
    <variation>DIFLFDD</variation>
    <location>
        <begin position="123"/>
        <end position="129"/>
    </location>
</feature>
<feature type="mutagenesis site" description="No defect in subcellular localization and tachyzoite lytic cycle. Impairs tachyzoite lytic cycle; when associated with 123-D--D-129 but not when associated with 380-K--T-387." evidence="2">
    <location>
        <begin position="230"/>
        <end position="363"/>
    </location>
</feature>
<feature type="mutagenesis site" description="No defect in subcellular localization and tachyzoite lytic cycle. Impairs tachyzoite lytic cycle; when associated with 230-E--E-363 DEL and 123-D--D-129." evidence="2">
    <location>
        <begin position="380"/>
        <end position="387"/>
    </location>
</feature>
<organism evidence="7">
    <name type="scientific">Toxoplasma gondii (strain ATCC 50853 / GT1)</name>
    <dbReference type="NCBI Taxonomy" id="507601"/>
    <lineage>
        <taxon>Eukaryota</taxon>
        <taxon>Sar</taxon>
        <taxon>Alveolata</taxon>
        <taxon>Apicomplexa</taxon>
        <taxon>Conoidasida</taxon>
        <taxon>Coccidia</taxon>
        <taxon>Eucoccidiorida</taxon>
        <taxon>Eimeriorina</taxon>
        <taxon>Sarcocystidae</taxon>
        <taxon>Toxoplasma</taxon>
    </lineage>
</organism>
<name>RASP2_TOXGG</name>
<gene>
    <name evidence="3" type="primary">RASP2</name>
    <name evidence="6" type="ORF">TGGT1_315160</name>
</gene>
<dbReference type="EMBL" id="AAQM03000250">
    <property type="protein sequence ID" value="EPR58892.1"/>
    <property type="molecule type" value="Genomic_DNA"/>
</dbReference>
<dbReference type="SMR" id="S7UMJ0"/>
<dbReference type="EnsemblProtists" id="EPR58892">
    <property type="protein sequence ID" value="EPR58892"/>
    <property type="gene ID" value="TGGT1_315160"/>
</dbReference>
<dbReference type="VEuPathDB" id="ToxoDB:TGGT1_315160"/>
<dbReference type="OrthoDB" id="2339at5809"/>
<dbReference type="Proteomes" id="UP000005641">
    <property type="component" value="Unassembled WGS sequence"/>
</dbReference>
<dbReference type="GO" id="GO:0031410">
    <property type="term" value="C:cytoplasmic vesicle"/>
    <property type="evidence" value="ECO:0007669"/>
    <property type="project" value="UniProtKB-KW"/>
</dbReference>
<dbReference type="GO" id="GO:0033016">
    <property type="term" value="C:rhoptry membrane"/>
    <property type="evidence" value="ECO:0007669"/>
    <property type="project" value="UniProtKB-SubCell"/>
</dbReference>
<dbReference type="GO" id="GO:1990215">
    <property type="term" value="P:symbiont-mediated perturbation of host vesicle-mediated transport"/>
    <property type="evidence" value="ECO:0000269"/>
    <property type="project" value="SigSci"/>
</dbReference>
<dbReference type="InterPro" id="IPR056293">
    <property type="entry name" value="PH_CERLI1"/>
</dbReference>
<dbReference type="Pfam" id="PF23634">
    <property type="entry name" value="PH_CERLI1"/>
    <property type="match status" value="1"/>
</dbReference>
<comment type="function">
    <text evidence="2">Essential for tachyzoite invasion of host cells by controlling rhoptry secretion (PubMed:31492901). Binds to phosphatidic acid (PA) and phosphatidylinositol 4,5-bisphosphate (PIP2) lipids and thus, likely contributes to the assembly of the machinery that docks or primes the rhoptry to the parasite cell membrane prior to the fusion with the host cell membrane (PubMed:31492901).</text>
</comment>
<comment type="subunit">
    <text evidence="2">Interacts with RASP1 (PubMed:31492901). Interacts with RASP3 (PubMed:31492901).</text>
</comment>
<comment type="subcellular location">
    <subcellularLocation>
        <location evidence="2">Cytoplasmic vesicle</location>
        <location evidence="2">Secretory vesicle</location>
        <location evidence="2">Rhoptry membrane</location>
        <topology evidence="2">Peripheral membrane protein</topology>
        <orientation evidence="2">Cytoplasmic side</orientation>
    </subcellularLocation>
    <text evidence="2">Localizes to the extremity of the neck of the rhoptry (PubMed:31492901). Associates only with mature rhoptries (PubMed:31492901).</text>
</comment>
<comment type="developmental stage">
    <text evidence="2">Expressed in tachyzoites (at protein level).</text>
</comment>
<comment type="domain">
    <text evidence="2">The C2 domain is a non-calcium binding domain (PubMed:31492901). Cooperates with the PH domain in the binding to phosphatidic acid (PA) and phosphatidylinositol 4,5-bisphosphate (PIP2) (PubMed:31492901).</text>
</comment>
<comment type="domain">
    <text evidence="2">The PH domain cooperates with the C2 domain in the binding to phosphatidic acid (PA) and phosphatidylinositol 4,5-bisphosphate (PIP2).</text>
</comment>
<comment type="disruption phenotype">
    <text evidence="2">Intracellular replication, parasite egress and motility occur normally; however, host cell invasion is severely reduced (PubMed:31492901). Complete inhibition of rhoptry secretion without affecting microneme secretion or rhoptry morphology (PubMed:31492901).</text>
</comment>
<reference evidence="7" key="1">
    <citation type="submission" date="2013-05" db="EMBL/GenBank/DDBJ databases">
        <authorList>
            <person name="Sibley D."/>
            <person name="Venepally P."/>
            <person name="Karamycheva S."/>
            <person name="Hadjithomas M."/>
            <person name="Khan A."/>
            <person name="Brunk B."/>
            <person name="Roos D."/>
            <person name="Caler E."/>
            <person name="Lorenzi H."/>
        </authorList>
    </citation>
    <scope>NUCLEOTIDE SEQUENCE [LARGE SCALE GENOMIC DNA]</scope>
    <source>
        <strain evidence="7">ATCC 50853 / GT1</strain>
    </source>
</reference>
<reference evidence="4" key="2">
    <citation type="journal article" date="2019" name="Nat. Commun.">
        <title>A lipid-binding protein mediates rhoptry discharge and invasion in Plasmodium falciparum and Toxoplasma gondii parasites.</title>
        <authorList>
            <person name="Suarez C."/>
            <person name="Lentini G."/>
            <person name="Ramaswamy R."/>
            <person name="Maynadier M."/>
            <person name="Aquilini E."/>
            <person name="Berry-Sterkers L."/>
            <person name="Cipriano M."/>
            <person name="Chen A.L."/>
            <person name="Bradley P."/>
            <person name="Striepen B."/>
            <person name="Boulanger M.J."/>
            <person name="Lebrun M."/>
        </authorList>
    </citation>
    <scope>FUNCTION</scope>
    <scope>INTERACTION WITH RASP1 AND RASP3</scope>
    <scope>SUBCELLULAR LOCATION</scope>
    <scope>DEVELOPMENTAL STAGE</scope>
    <scope>DOMAIN</scope>
    <scope>DISRUPTION PHENOTYPE</scope>
    <scope>MUTAGENESIS OF 62-PHE--LEU-179; 123-LYS--LYS-129; 230-GLU--GLU-363 AND 380-LYS--THR-387</scope>
</reference>